<proteinExistence type="evidence at protein level"/>
<sequence length="72" mass="8155">MENPHEQVQANILSRIIGNVKRLNESVAILNQELVTINNRNKNLEIMGAICDNYHSSVQFNLEATNNKKPPL</sequence>
<name>DAD4_YEAST</name>
<protein>
    <recommendedName>
        <fullName>DASH complex subunit DAD4</fullName>
    </recommendedName>
    <alternativeName>
        <fullName>DUO1 and DAM1-interacting protein 4</fullName>
    </alternativeName>
    <alternativeName>
        <fullName>Helper of ASK1 protein 2</fullName>
    </alternativeName>
    <alternativeName>
        <fullName>Outer kinetochore protein DAD4</fullName>
    </alternativeName>
</protein>
<organism>
    <name type="scientific">Saccharomyces cerevisiae (strain ATCC 204508 / S288c)</name>
    <name type="common">Baker's yeast</name>
    <dbReference type="NCBI Taxonomy" id="559292"/>
    <lineage>
        <taxon>Eukaryota</taxon>
        <taxon>Fungi</taxon>
        <taxon>Dikarya</taxon>
        <taxon>Ascomycota</taxon>
        <taxon>Saccharomycotina</taxon>
        <taxon>Saccharomycetes</taxon>
        <taxon>Saccharomycetales</taxon>
        <taxon>Saccharomycetaceae</taxon>
        <taxon>Saccharomyces</taxon>
    </lineage>
</organism>
<reference key="1">
    <citation type="journal article" date="1997" name="Nature">
        <title>The nucleotide sequence of Saccharomyces cerevisiae chromosome IV.</title>
        <authorList>
            <person name="Jacq C."/>
            <person name="Alt-Moerbe J."/>
            <person name="Andre B."/>
            <person name="Arnold W."/>
            <person name="Bahr A."/>
            <person name="Ballesta J.P.G."/>
            <person name="Bargues M."/>
            <person name="Baron L."/>
            <person name="Becker A."/>
            <person name="Biteau N."/>
            <person name="Bloecker H."/>
            <person name="Blugeon C."/>
            <person name="Boskovic J."/>
            <person name="Brandt P."/>
            <person name="Brueckner M."/>
            <person name="Buitrago M.J."/>
            <person name="Coster F."/>
            <person name="Delaveau T."/>
            <person name="del Rey F."/>
            <person name="Dujon B."/>
            <person name="Eide L.G."/>
            <person name="Garcia-Cantalejo J.M."/>
            <person name="Goffeau A."/>
            <person name="Gomez-Peris A."/>
            <person name="Granotier C."/>
            <person name="Hanemann V."/>
            <person name="Hankeln T."/>
            <person name="Hoheisel J.D."/>
            <person name="Jaeger W."/>
            <person name="Jimenez A."/>
            <person name="Jonniaux J.-L."/>
            <person name="Kraemer C."/>
            <person name="Kuester H."/>
            <person name="Laamanen P."/>
            <person name="Legros Y."/>
            <person name="Louis E.J."/>
            <person name="Moeller-Rieker S."/>
            <person name="Monnet A."/>
            <person name="Moro M."/>
            <person name="Mueller-Auer S."/>
            <person name="Nussbaumer B."/>
            <person name="Paricio N."/>
            <person name="Paulin L."/>
            <person name="Perea J."/>
            <person name="Perez-Alonso M."/>
            <person name="Perez-Ortin J.E."/>
            <person name="Pohl T.M."/>
            <person name="Prydz H."/>
            <person name="Purnelle B."/>
            <person name="Rasmussen S.W."/>
            <person name="Remacha M.A."/>
            <person name="Revuelta J.L."/>
            <person name="Rieger M."/>
            <person name="Salom D."/>
            <person name="Saluz H.P."/>
            <person name="Saiz J.E."/>
            <person name="Saren A.-M."/>
            <person name="Schaefer M."/>
            <person name="Scharfe M."/>
            <person name="Schmidt E.R."/>
            <person name="Schneider C."/>
            <person name="Scholler P."/>
            <person name="Schwarz S."/>
            <person name="Soler-Mira A."/>
            <person name="Urrestarazu L.A."/>
            <person name="Verhasselt P."/>
            <person name="Vissers S."/>
            <person name="Voet M."/>
            <person name="Volckaert G."/>
            <person name="Wagner G."/>
            <person name="Wambutt R."/>
            <person name="Wedler E."/>
            <person name="Wedler H."/>
            <person name="Woelfl S."/>
            <person name="Harris D.E."/>
            <person name="Bowman S."/>
            <person name="Brown D."/>
            <person name="Churcher C.M."/>
            <person name="Connor R."/>
            <person name="Dedman K."/>
            <person name="Gentles S."/>
            <person name="Hamlin N."/>
            <person name="Hunt S."/>
            <person name="Jones L."/>
            <person name="McDonald S."/>
            <person name="Murphy L.D."/>
            <person name="Niblett D."/>
            <person name="Odell C."/>
            <person name="Oliver K."/>
            <person name="Rajandream M.A."/>
            <person name="Richards C."/>
            <person name="Shore L."/>
            <person name="Walsh S.V."/>
            <person name="Barrell B.G."/>
            <person name="Dietrich F.S."/>
            <person name="Mulligan J.T."/>
            <person name="Allen E."/>
            <person name="Araujo R."/>
            <person name="Aviles E."/>
            <person name="Berno A."/>
            <person name="Carpenter J."/>
            <person name="Chen E."/>
            <person name="Cherry J.M."/>
            <person name="Chung E."/>
            <person name="Duncan M."/>
            <person name="Hunicke-Smith S."/>
            <person name="Hyman R.W."/>
            <person name="Komp C."/>
            <person name="Lashkari D."/>
            <person name="Lew H."/>
            <person name="Lin D."/>
            <person name="Mosedale D."/>
            <person name="Nakahara K."/>
            <person name="Namath A."/>
            <person name="Oefner P."/>
            <person name="Oh C."/>
            <person name="Petel F.X."/>
            <person name="Roberts D."/>
            <person name="Schramm S."/>
            <person name="Schroeder M."/>
            <person name="Shogren T."/>
            <person name="Shroff N."/>
            <person name="Winant A."/>
            <person name="Yelton M.A."/>
            <person name="Botstein D."/>
            <person name="Davis R.W."/>
            <person name="Johnston M."/>
            <person name="Andrews S."/>
            <person name="Brinkman R."/>
            <person name="Cooper J."/>
            <person name="Ding H."/>
            <person name="Du Z."/>
            <person name="Favello A."/>
            <person name="Fulton L."/>
            <person name="Gattung S."/>
            <person name="Greco T."/>
            <person name="Hallsworth K."/>
            <person name="Hawkins J."/>
            <person name="Hillier L.W."/>
            <person name="Jier M."/>
            <person name="Johnson D."/>
            <person name="Johnston L."/>
            <person name="Kirsten J."/>
            <person name="Kucaba T."/>
            <person name="Langston Y."/>
            <person name="Latreille P."/>
            <person name="Le T."/>
            <person name="Mardis E."/>
            <person name="Menezes S."/>
            <person name="Miller N."/>
            <person name="Nhan M."/>
            <person name="Pauley A."/>
            <person name="Peluso D."/>
            <person name="Rifkin L."/>
            <person name="Riles L."/>
            <person name="Taich A."/>
            <person name="Trevaskis E."/>
            <person name="Vignati D."/>
            <person name="Wilcox L."/>
            <person name="Wohldman P."/>
            <person name="Vaudin M."/>
            <person name="Wilson R."/>
            <person name="Waterston R."/>
            <person name="Albermann K."/>
            <person name="Hani J."/>
            <person name="Heumann K."/>
            <person name="Kleine K."/>
            <person name="Mewes H.-W."/>
            <person name="Zollner A."/>
            <person name="Zaccaria P."/>
        </authorList>
    </citation>
    <scope>NUCLEOTIDE SEQUENCE [LARGE SCALE GENOMIC DNA]</scope>
    <source>
        <strain>ATCC 204508 / S288c</strain>
    </source>
</reference>
<reference key="2">
    <citation type="journal article" date="2014" name="G3 (Bethesda)">
        <title>The reference genome sequence of Saccharomyces cerevisiae: Then and now.</title>
        <authorList>
            <person name="Engel S.R."/>
            <person name="Dietrich F.S."/>
            <person name="Fisk D.G."/>
            <person name="Binkley G."/>
            <person name="Balakrishnan R."/>
            <person name="Costanzo M.C."/>
            <person name="Dwight S.S."/>
            <person name="Hitz B.C."/>
            <person name="Karra K."/>
            <person name="Nash R.S."/>
            <person name="Weng S."/>
            <person name="Wong E.D."/>
            <person name="Lloyd P."/>
            <person name="Skrzypek M.S."/>
            <person name="Miyasato S.R."/>
            <person name="Simison M."/>
            <person name="Cherry J.M."/>
        </authorList>
    </citation>
    <scope>GENOME REANNOTATION</scope>
    <source>
        <strain>ATCC 204508 / S288c</strain>
    </source>
</reference>
<reference key="3">
    <citation type="journal article" date="2002" name="Cell">
        <title>Phospho-regulation of kinetochore-microtubule attachments by the Aurora kinase Ipl1p.</title>
        <authorList>
            <person name="Cheeseman I.M."/>
            <person name="Anderson S."/>
            <person name="Jwa M."/>
            <person name="Green E.M."/>
            <person name="Kang J.-S."/>
            <person name="Yates J.R. III"/>
            <person name="Chan C.S.M."/>
            <person name="Drubin D.G."/>
            <person name="Barnes G."/>
        </authorList>
    </citation>
    <scope>IDENTIFICATION BY MASS SPECTROMETRY</scope>
    <scope>IDENTIFICATION IN THE DASH COMPLEX</scope>
</reference>
<reference key="4">
    <citation type="journal article" date="2003" name="Nature">
        <title>Global analysis of protein localization in budding yeast.</title>
        <authorList>
            <person name="Huh W.-K."/>
            <person name="Falvo J.V."/>
            <person name="Gerke L.C."/>
            <person name="Carroll A.S."/>
            <person name="Howson R.W."/>
            <person name="Weissman J.S."/>
            <person name="O'Shea E.K."/>
        </authorList>
    </citation>
    <scope>SUBCELLULAR LOCATION [LARGE SCALE ANALYSIS]</scope>
</reference>
<reference key="5">
    <citation type="journal article" date="2003" name="Nature">
        <title>Global analysis of protein expression in yeast.</title>
        <authorList>
            <person name="Ghaemmaghami S."/>
            <person name="Huh W.-K."/>
            <person name="Bower K."/>
            <person name="Howson R.W."/>
            <person name="Belle A."/>
            <person name="Dephoure N."/>
            <person name="O'Shea E.K."/>
            <person name="Weissman J.S."/>
        </authorList>
    </citation>
    <scope>LEVEL OF PROTEIN EXPRESSION [LARGE SCALE ANALYSIS]</scope>
</reference>
<reference key="6">
    <citation type="journal article" date="2005" name="Mol. Cell. Biol.">
        <title>Genetic analysis of the kinetochore DASH complex reveals an antagonistic relationship with the ras/protein kinase A pathway and a novel subunit required for Ask1 association.</title>
        <authorList>
            <person name="Li J.-M."/>
            <person name="Li Y."/>
            <person name="Elledge S.J."/>
        </authorList>
    </citation>
    <scope>IDENTIFICATION IN THE DASH COMPLEX</scope>
</reference>
<reference key="7">
    <citation type="journal article" date="2005" name="Mol. Cell">
        <title>Formation of a dynamic kinetochore-microtubule interface through assembly of the Dam1 ring complex.</title>
        <authorList>
            <person name="Westermann S."/>
            <person name="Avila-Sakar A."/>
            <person name="Wang H.-W."/>
            <person name="Niederstrasser H."/>
            <person name="Wong J."/>
            <person name="Drubin D.G."/>
            <person name="Nogales E."/>
            <person name="Barnes G."/>
        </authorList>
    </citation>
    <scope>FUNCTION</scope>
</reference>
<reference key="8">
    <citation type="journal article" date="2007" name="Genes Dev.">
        <title>Kinetochore microtubule interaction during S phase in Saccharomyces cerevisiae.</title>
        <authorList>
            <person name="Kitamura E."/>
            <person name="Tanaka K."/>
            <person name="Kitamura Y."/>
            <person name="Tanaka T.U."/>
        </authorList>
    </citation>
    <scope>FUNCTION</scope>
</reference>
<reference key="9">
    <citation type="journal article" date="2012" name="Proc. Natl. Acad. Sci. U.S.A.">
        <title>N-terminal acetylome analyses and functional insights of the N-terminal acetyltransferase NatB.</title>
        <authorList>
            <person name="Van Damme P."/>
            <person name="Lasa M."/>
            <person name="Polevoda B."/>
            <person name="Gazquez C."/>
            <person name="Elosegui-Artola A."/>
            <person name="Kim D.S."/>
            <person name="De Juan-Pardo E."/>
            <person name="Demeyer K."/>
            <person name="Hole K."/>
            <person name="Larrea E."/>
            <person name="Timmerman E."/>
            <person name="Prieto J."/>
            <person name="Arnesen T."/>
            <person name="Sherman F."/>
            <person name="Gevaert K."/>
            <person name="Aldabe R."/>
        </authorList>
    </citation>
    <scope>ACETYLATION [LARGE SCALE ANALYSIS] AT MET-1</scope>
    <scope>IDENTIFICATION BY MASS SPECTROMETRY [LARGE SCALE ANALYSIS]</scope>
</reference>
<reference key="10">
    <citation type="journal article" date="2006" name="Nature">
        <title>The Dam1 kinetochore ring complex moves processively on depolymerizing microtubule ends.</title>
        <authorList>
            <person name="Westermann S."/>
            <person name="Wang H.-W."/>
            <person name="Avila-Sakar A."/>
            <person name="Drubin D.G."/>
            <person name="Nogales E."/>
            <person name="Barnes G."/>
        </authorList>
    </citation>
    <scope>FUNCTION</scope>
</reference>
<reference key="11">
    <citation type="journal article" date="2006" name="Nat. Cell Biol.">
        <title>Molecular architecture of a kinetochore-microtubule attachment site.</title>
        <authorList>
            <person name="Joglekar A.P."/>
            <person name="Bouck D.C."/>
            <person name="Molk J.N."/>
            <person name="Bloom K.S."/>
            <person name="Salmon E.D."/>
        </authorList>
    </citation>
    <scope>IDENTIFICATION IN THE DASH COMPLEX</scope>
</reference>
<reference key="12">
    <citation type="journal article" date="2006" name="Proc. Natl. Acad. Sci. U.S.A.">
        <title>The Dam1 kinetochore complex harnesses microtubule dynamics to produce force and movement.</title>
        <authorList>
            <person name="Asbury C.L."/>
            <person name="Gestaut D.R."/>
            <person name="Powers A.F."/>
            <person name="Franck A.D."/>
            <person name="Davis T.N."/>
        </authorList>
    </citation>
    <scope>FUNCTION</scope>
</reference>
<reference key="13">
    <citation type="journal article" date="2007" name="Mol. Biol. Cell">
        <title>Protein arms in the kinetochore-microtubule interface of the yeast DASH complex.</title>
        <authorList>
            <person name="Miranda J.J."/>
            <person name="King D.S."/>
            <person name="Harrison S.C."/>
        </authorList>
    </citation>
    <scope>FUNCTION</scope>
    <scope>IDENTIFICATION IN THE DASH COMPLEX</scope>
</reference>
<reference key="14">
    <citation type="journal article" date="2014" name="Curr. Biol.">
        <title>Assembling the protein architecture of the budding yeast kinetochore-microtubule attachment using FRET.</title>
        <authorList>
            <person name="Aravamudhan P."/>
            <person name="Felzer-Kim I."/>
            <person name="Gurunathan K."/>
            <person name="Joglekar A.P."/>
        </authorList>
    </citation>
    <scope>IDENTIFICATION IN THE DASH COMPLEX</scope>
</reference>
<reference key="15">
    <citation type="journal article" date="2014" name="Nat. Commun.">
        <title>Kinetochores require oligomerization of Dam1 complex to maintain microtubule attachments against tension and promote biorientation.</title>
        <authorList>
            <person name="Umbreit N.T."/>
            <person name="Miller M.P."/>
            <person name="Tien J.F."/>
            <person name="Ortola J.C."/>
            <person name="Gui L."/>
            <person name="Lee K.K."/>
            <person name="Biggins S."/>
            <person name="Asbury C.L."/>
            <person name="Davis T.N."/>
        </authorList>
    </citation>
    <scope>FUNCTION</scope>
    <scope>IDENTIFICATION IN THE DASH COMPLEX</scope>
    <scope>SUBUNIT</scope>
</reference>
<reference key="16">
    <citation type="journal article" date="2023" name="Cell Rep.">
        <title>Single-copy locus proteomics of early- and late-firing DNA replication origins identifies a role of Ask1/DASH complex in replication timing control.</title>
        <authorList>
            <person name="Weibeta M."/>
            <person name="Chanou A."/>
            <person name="Schauer T."/>
            <person name="Tvardovskiy A."/>
            <person name="Meiser S."/>
            <person name="Koenig A.C."/>
            <person name="Schmidt T."/>
            <person name="Kruse E."/>
            <person name="Ummethum H."/>
            <person name="Trauner M."/>
            <person name="Werner M."/>
            <person name="Lalonde M."/>
            <person name="Hauck S.M."/>
            <person name="Scialdone A."/>
            <person name="Hamperl S."/>
        </authorList>
    </citation>
    <scope>FUNCTION</scope>
</reference>
<reference key="17">
    <citation type="journal article" date="2023" name="EMBO J.">
        <title>DASH/Dam1 complex mutants stabilize ploidy in histone-humanized yeast by weakening kinetochore-microtubule attachments.</title>
        <authorList>
            <person name="Haase M.A.B."/>
            <person name="Olafsson G."/>
            <person name="Flores R.L."/>
            <person name="Boakye-Ansah E."/>
            <person name="Zelter A."/>
            <person name="Dickinson M.S."/>
            <person name="Lazar-Stefanita L."/>
            <person name="Truong D.M."/>
            <person name="Asbury C.L."/>
            <person name="Davis T.N."/>
            <person name="Boeke J.D."/>
        </authorList>
    </citation>
    <scope>MUTAGENESIS OF ASN-61</scope>
</reference>
<reference key="18">
    <citation type="journal article" date="2005" name="Nat. Struct. Mol. Biol.">
        <title>The yeast DASH complex forms closed rings on microtubules.</title>
        <authorList>
            <person name="Miranda J.L."/>
            <person name="Wulf P.D."/>
            <person name="Sorger P.K."/>
            <person name="Harrison S.C."/>
        </authorList>
    </citation>
    <scope>ELECTRON MICROSCOPY OF DASH COMPLEX ALONE AND BOUND TO MICROTUBULES</scope>
    <scope>FUNCTION</scope>
    <scope>IDENTIFICATION IN THE DASH COMPLEX</scope>
</reference>
<reference key="19">
    <citation type="journal article" date="2007" name="Nat. Struct. Mol. Biol.">
        <title>Architecture of the Dam1 kinetochore ring complex and implications for microtubule-driven assembly and force-coupling mechanisms.</title>
        <authorList>
            <person name="Wang H.W."/>
            <person name="Ramey V.H."/>
            <person name="Westermann S."/>
            <person name="Leschziner A.E."/>
            <person name="Welburn J.P."/>
            <person name="Nakajima Y."/>
            <person name="Drubin D.G."/>
            <person name="Barnes G."/>
            <person name="Nogales E."/>
        </authorList>
    </citation>
    <scope>ELECTRON MICROSCOPY OF DASH COMPLEX</scope>
    <scope>FUNCTION</scope>
    <scope>IDENTIFICATION IN THE DASH COMPLEX</scope>
    <scope>SUBUNIT</scope>
</reference>
<feature type="chain" id="PRO_0000176053" description="DASH complex subunit DAD4">
    <location>
        <begin position="1"/>
        <end position="72"/>
    </location>
</feature>
<feature type="coiled-coil region" evidence="2">
    <location>
        <begin position="19"/>
        <end position="47"/>
    </location>
</feature>
<feature type="modified residue" description="N-acetylmethionine" evidence="19">
    <location>
        <position position="1"/>
    </location>
</feature>
<feature type="mutagenesis site" description="Decreases cell population growth." evidence="16">
    <original>N</original>
    <variation>K</variation>
    <location>
        <position position="61"/>
    </location>
</feature>
<keyword id="KW-0002">3D-structure</keyword>
<keyword id="KW-0007">Acetylation</keyword>
<keyword id="KW-0131">Cell cycle</keyword>
<keyword id="KW-0132">Cell division</keyword>
<keyword id="KW-0137">Centromere</keyword>
<keyword id="KW-0158">Chromosome</keyword>
<keyword id="KW-0159">Chromosome partition</keyword>
<keyword id="KW-0175">Coiled coil</keyword>
<keyword id="KW-0963">Cytoplasm</keyword>
<keyword id="KW-0206">Cytoskeleton</keyword>
<keyword id="KW-0995">Kinetochore</keyword>
<keyword id="KW-0493">Microtubule</keyword>
<keyword id="KW-0498">Mitosis</keyword>
<keyword id="KW-0539">Nucleus</keyword>
<keyword id="KW-1185">Reference proteome</keyword>
<gene>
    <name type="primary">DAD4</name>
    <name type="synonym">HSK2</name>
    <name type="ordered locus">YDR320C-A</name>
</gene>
<accession>P69851</accession>
<accession>D6VSV2</accession>
<dbReference type="EMBL" id="U32517">
    <property type="status" value="NOT_ANNOTATED_CDS"/>
    <property type="molecule type" value="Genomic_DNA"/>
</dbReference>
<dbReference type="EMBL" id="BK006938">
    <property type="protein sequence ID" value="DAA12162.1"/>
    <property type="molecule type" value="Genomic_DNA"/>
</dbReference>
<dbReference type="RefSeq" id="NP_710144.3">
    <property type="nucleotide sequence ID" value="NM_001184470.3"/>
</dbReference>
<dbReference type="PDB" id="8Q84">
    <property type="method" value="EM"/>
    <property type="resolution" value="3.15 A"/>
    <property type="chains" value="M/Y=1-72"/>
</dbReference>
<dbReference type="PDB" id="8Q85">
    <property type="method" value="EM"/>
    <property type="resolution" value="3.97 A"/>
    <property type="chains" value="Y=1-72"/>
</dbReference>
<dbReference type="PDBsum" id="8Q84"/>
<dbReference type="PDBsum" id="8Q85"/>
<dbReference type="EMDB" id="EMD-18246"/>
<dbReference type="EMDB" id="EMD-18247"/>
<dbReference type="SMR" id="P69851"/>
<dbReference type="BioGRID" id="32377">
    <property type="interactions" value="41"/>
</dbReference>
<dbReference type="ComplexPortal" id="CPX-1041">
    <property type="entry name" value="DASH complex"/>
</dbReference>
<dbReference type="FunCoup" id="P69851">
    <property type="interactions" value="36"/>
</dbReference>
<dbReference type="IntAct" id="P69851">
    <property type="interactions" value="10"/>
</dbReference>
<dbReference type="MINT" id="P69851"/>
<dbReference type="STRING" id="4932.YDR320C-A"/>
<dbReference type="iPTMnet" id="P69851"/>
<dbReference type="PaxDb" id="4932-YDR320C-A"/>
<dbReference type="PeptideAtlas" id="P69851"/>
<dbReference type="EnsemblFungi" id="YDR320C-A_mRNA">
    <property type="protein sequence ID" value="YDR320C-A"/>
    <property type="gene ID" value="YDR320C-A"/>
</dbReference>
<dbReference type="GeneID" id="851919"/>
<dbReference type="KEGG" id="sce:YDR320C-A"/>
<dbReference type="AGR" id="SGD:S000007604"/>
<dbReference type="SGD" id="S000007604">
    <property type="gene designation" value="DAD4"/>
</dbReference>
<dbReference type="VEuPathDB" id="FungiDB:YDR320C-A"/>
<dbReference type="eggNOG" id="ENOG502S890">
    <property type="taxonomic scope" value="Eukaryota"/>
</dbReference>
<dbReference type="HOGENOM" id="CLU_177920_0_0_1"/>
<dbReference type="InParanoid" id="P69851"/>
<dbReference type="OMA" id="SQMWANY"/>
<dbReference type="OrthoDB" id="5516652at2759"/>
<dbReference type="BioCyc" id="YEAST:G3O-30110-MONOMER"/>
<dbReference type="BioGRID-ORCS" id="851919">
    <property type="hits" value="6 hits in 10 CRISPR screens"/>
</dbReference>
<dbReference type="CD-CODE" id="876000F7">
    <property type="entry name" value="Centrosome"/>
</dbReference>
<dbReference type="PRO" id="PR:P69851"/>
<dbReference type="Proteomes" id="UP000002311">
    <property type="component" value="Chromosome IV"/>
</dbReference>
<dbReference type="RNAct" id="P69851">
    <property type="molecule type" value="protein"/>
</dbReference>
<dbReference type="GO" id="GO:0005737">
    <property type="term" value="C:cytoplasm"/>
    <property type="evidence" value="ECO:0007669"/>
    <property type="project" value="UniProtKB-KW"/>
</dbReference>
<dbReference type="GO" id="GO:0042729">
    <property type="term" value="C:DASH complex"/>
    <property type="evidence" value="ECO:0000314"/>
    <property type="project" value="SGD"/>
</dbReference>
<dbReference type="GO" id="GO:0005874">
    <property type="term" value="C:microtubule"/>
    <property type="evidence" value="ECO:0007669"/>
    <property type="project" value="UniProtKB-KW"/>
</dbReference>
<dbReference type="GO" id="GO:0072686">
    <property type="term" value="C:mitotic spindle"/>
    <property type="evidence" value="ECO:0000303"/>
    <property type="project" value="ComplexPortal"/>
</dbReference>
<dbReference type="GO" id="GO:0008608">
    <property type="term" value="P:attachment of spindle microtubules to kinetochore"/>
    <property type="evidence" value="ECO:0000314"/>
    <property type="project" value="SGD"/>
</dbReference>
<dbReference type="GO" id="GO:0051301">
    <property type="term" value="P:cell division"/>
    <property type="evidence" value="ECO:0007669"/>
    <property type="project" value="UniProtKB-KW"/>
</dbReference>
<dbReference type="GO" id="GO:1990758">
    <property type="term" value="P:mitotic sister chromatid biorientation"/>
    <property type="evidence" value="ECO:0000314"/>
    <property type="project" value="ComplexPortal"/>
</dbReference>
<dbReference type="GO" id="GO:0051987">
    <property type="term" value="P:positive regulation of attachment of spindle microtubules to kinetochore"/>
    <property type="evidence" value="ECO:0000314"/>
    <property type="project" value="ComplexPortal"/>
</dbReference>
<dbReference type="GO" id="GO:0031116">
    <property type="term" value="P:positive regulation of microtubule polymerization"/>
    <property type="evidence" value="ECO:0000314"/>
    <property type="project" value="SGD"/>
</dbReference>
<dbReference type="GO" id="GO:1990976">
    <property type="term" value="P:protein transport along microtubule to mitotic spindle pole body"/>
    <property type="evidence" value="ECO:0000315"/>
    <property type="project" value="UniProtKB"/>
</dbReference>
<dbReference type="InterPro" id="IPR013959">
    <property type="entry name" value="DASH_Dad4"/>
</dbReference>
<dbReference type="PANTHER" id="PTHR28222">
    <property type="entry name" value="DASH COMPLEX SUBUNIT DAD4"/>
    <property type="match status" value="1"/>
</dbReference>
<dbReference type="PANTHER" id="PTHR28222:SF1">
    <property type="entry name" value="DASH COMPLEX SUBUNIT DAD4"/>
    <property type="match status" value="1"/>
</dbReference>
<dbReference type="Pfam" id="PF08650">
    <property type="entry name" value="DASH_Dad4"/>
    <property type="match status" value="1"/>
</dbReference>
<comment type="function">
    <text evidence="3 6 7 8 10 11 12 13 15 17">Component of the DASH complex that connects microtubules with kinetochores and couples microtubule depolymerisation to chromosome movement; it is involved in retrieving kinetochores to the spindle poles before their re-orientation on the spindle in early mitosis and allows microtubule depolymerization to pull chromosomes apart and resist detachment during anaphase (PubMed:15664196, PubMed:16415853, PubMed:16777964, PubMed:17460120, PubMed:17643123). Kinetochores, consisting of a centromere-associated inner segment and a microtubule-contacting outer segment, play a crucial role in chromosome segregation by mediating the physical connection between centromeric DNA and microtubules (PubMed:15664196, PubMed:25236177). Kinetochores also serve as an input point for the spindle assembly checkpoint, which delays anaphase until all chromosomes have bioriented on the mitotic spindle (PubMed:12408861). During spindle-kinetochore attachment, kinetochores first attach to the lateral surface of spindle microtubules, which supports the congression of chromosomes toward the middle of the dividing cell; they then slide along towards the spindle pole, a process independent of the DASH complex but requiring the NDC80 complex (PubMed:25236177). When the end of a disassembling microtubule reaches the laterally attached kinetochore, the DASH complex together with the NDC80 complex and STU2 convert lateral attachment to end-on capture to produce a structure that can track with microtubule shortening and sustain attachment when tension is applied across sister kinetochores upon their biorientation (PubMed:15640796, PubMed:15664196, PubMed:25236177). Microtubule depolymerization proceeds by protofilament splaying and induces the kinetochore-attached DASH complex to slide longitudinally, thereby helping to transduce depolymerization energy into pulling forces to disjoin chromatids (PubMed:16415853, PubMed:16777964). Incorrect microtubule attachments are corrected by releasing microubules from the kinetochore through phosphorylation by IPL1 of kinetochore components (PubMed:12408861). Links the microtubule cytoskeleton to chromosomes during interphase (PubMed:36701236). Also contributes to the poleward transport of kinetochores on microtubules following centromeric DNA replication in S-phase (PubMed:18079178).</text>
</comment>
<comment type="subunit">
    <text evidence="1 6 9 11 12 14 15">Component of the DASH complex consisting of ASK1, DAD1, DAD2, DAD3, DAD4, DAM1, DUO1, HSK3, SPC19 and SPC34, with a stoichiometry of one copy of each subunit per complex (PubMed:15640796, PubMed:16715078, PubMed:17460120, PubMed:17643123, PubMed:24930965, PubMed:25236177). Multiple DASH complexes oligomerize to form a ring that encircles spindle microtubules and organizes the rod-like NDC80 complexes of the outer kinetochore (PubMed:16715078, PubMed:17460120, PubMed:17643123, PubMed:25236177). DASH complex oligomerization strengthens microtubule attachments (PubMed:25236177). On cytoplasmic microtubules, DASH complexes appear to form patches instead of rings (By similarity).</text>
</comment>
<comment type="interaction">
    <interactant intactId="EBI-975389">
        <id>P69851</id>
    </interactant>
    <interactant intactId="EBI-35662">
        <id>Q12248</id>
        <label>DAD1</label>
    </interactant>
    <organismsDiffer>false</organismsDiffer>
    <experiments>3</experiments>
</comment>
<comment type="subcellular location">
    <subcellularLocation>
        <location evidence="4">Nucleus</location>
    </subcellularLocation>
    <subcellularLocation>
        <location evidence="4">Cytoplasm</location>
        <location evidence="4">Cytoskeleton</location>
        <location evidence="4">Spindle</location>
    </subcellularLocation>
    <subcellularLocation>
        <location evidence="4">Chromosome</location>
        <location evidence="4">Centromere</location>
        <location evidence="4">Kinetochore</location>
    </subcellularLocation>
    <text>Associates with the mitotic spindle and the kinetochore.</text>
</comment>
<comment type="miscellaneous">
    <text evidence="5">Present with 967 molecules/cell in log phase SD medium.</text>
</comment>
<comment type="similarity">
    <text evidence="18">Belongs to the DASH complex DAD4 family.</text>
</comment>
<evidence type="ECO:0000250" key="1">
    <source>
        <dbReference type="UniProtKB" id="Q50HP4"/>
    </source>
</evidence>
<evidence type="ECO:0000255" key="2"/>
<evidence type="ECO:0000269" key="3">
    <source>
    </source>
</evidence>
<evidence type="ECO:0000269" key="4">
    <source>
    </source>
</evidence>
<evidence type="ECO:0000269" key="5">
    <source>
    </source>
</evidence>
<evidence type="ECO:0000269" key="6">
    <source>
    </source>
</evidence>
<evidence type="ECO:0000269" key="7">
    <source>
    </source>
</evidence>
<evidence type="ECO:0000269" key="8">
    <source>
    </source>
</evidence>
<evidence type="ECO:0000269" key="9">
    <source>
    </source>
</evidence>
<evidence type="ECO:0000269" key="10">
    <source>
    </source>
</evidence>
<evidence type="ECO:0000269" key="11">
    <source>
    </source>
</evidence>
<evidence type="ECO:0000269" key="12">
    <source>
    </source>
</evidence>
<evidence type="ECO:0000269" key="13">
    <source>
    </source>
</evidence>
<evidence type="ECO:0000269" key="14">
    <source>
    </source>
</evidence>
<evidence type="ECO:0000269" key="15">
    <source>
    </source>
</evidence>
<evidence type="ECO:0000269" key="16">
    <source>
    </source>
</evidence>
<evidence type="ECO:0000269" key="17">
    <source>
    </source>
</evidence>
<evidence type="ECO:0000305" key="18"/>
<evidence type="ECO:0007744" key="19">
    <source>
    </source>
</evidence>